<feature type="chain" id="PRO_0000258053" description="Leucyl/phenylalanyl-tRNA--protein transferase">
    <location>
        <begin position="1"/>
        <end position="215"/>
    </location>
</feature>
<name>LFTR_CAMJR</name>
<accession>Q5HTZ5</accession>
<keyword id="KW-0012">Acyltransferase</keyword>
<keyword id="KW-0963">Cytoplasm</keyword>
<keyword id="KW-0808">Transferase</keyword>
<protein>
    <recommendedName>
        <fullName evidence="1">Leucyl/phenylalanyl-tRNA--protein transferase</fullName>
        <ecNumber evidence="1">2.3.2.6</ecNumber>
    </recommendedName>
    <alternativeName>
        <fullName evidence="1">L/F-transferase</fullName>
    </alternativeName>
    <alternativeName>
        <fullName evidence="1">Leucyltransferase</fullName>
    </alternativeName>
    <alternativeName>
        <fullName evidence="1">Phenyalanyltransferase</fullName>
    </alternativeName>
</protein>
<reference key="1">
    <citation type="journal article" date="2005" name="PLoS Biol.">
        <title>Major structural differences and novel potential virulence mechanisms from the genomes of multiple Campylobacter species.</title>
        <authorList>
            <person name="Fouts D.E."/>
            <person name="Mongodin E.F."/>
            <person name="Mandrell R.E."/>
            <person name="Miller W.G."/>
            <person name="Rasko D.A."/>
            <person name="Ravel J."/>
            <person name="Brinkac L.M."/>
            <person name="DeBoy R.T."/>
            <person name="Parker C.T."/>
            <person name="Daugherty S.C."/>
            <person name="Dodson R.J."/>
            <person name="Durkin A.S."/>
            <person name="Madupu R."/>
            <person name="Sullivan S.A."/>
            <person name="Shetty J.U."/>
            <person name="Ayodeji M.A."/>
            <person name="Shvartsbeyn A."/>
            <person name="Schatz M.C."/>
            <person name="Badger J.H."/>
            <person name="Fraser C.M."/>
            <person name="Nelson K.E."/>
        </authorList>
    </citation>
    <scope>NUCLEOTIDE SEQUENCE [LARGE SCALE GENOMIC DNA]</scope>
    <source>
        <strain>RM1221</strain>
    </source>
</reference>
<dbReference type="EC" id="2.3.2.6" evidence="1"/>
<dbReference type="EMBL" id="CP000025">
    <property type="protein sequence ID" value="AAW35574.1"/>
    <property type="molecule type" value="Genomic_DNA"/>
</dbReference>
<dbReference type="RefSeq" id="WP_002867202.1">
    <property type="nucleotide sequence ID" value="NC_003912.7"/>
</dbReference>
<dbReference type="SMR" id="Q5HTZ5"/>
<dbReference type="KEGG" id="cjr:CJE1252"/>
<dbReference type="HOGENOM" id="CLU_075045_0_1_7"/>
<dbReference type="GO" id="GO:0005737">
    <property type="term" value="C:cytoplasm"/>
    <property type="evidence" value="ECO:0007669"/>
    <property type="project" value="UniProtKB-SubCell"/>
</dbReference>
<dbReference type="GO" id="GO:0008914">
    <property type="term" value="F:leucyl-tRNA--protein transferase activity"/>
    <property type="evidence" value="ECO:0007669"/>
    <property type="project" value="UniProtKB-UniRule"/>
</dbReference>
<dbReference type="GO" id="GO:0030163">
    <property type="term" value="P:protein catabolic process"/>
    <property type="evidence" value="ECO:0007669"/>
    <property type="project" value="UniProtKB-UniRule"/>
</dbReference>
<dbReference type="Gene3D" id="3.40.630.70">
    <property type="entry name" value="Leucyl/phenylalanyl-tRNA-protein transferase, C-terminal domain"/>
    <property type="match status" value="1"/>
</dbReference>
<dbReference type="Gene3D" id="3.30.70.3550">
    <property type="entry name" value="Leucyl/phenylalanyl-tRNA-protein transferase, N-terminal domain"/>
    <property type="match status" value="1"/>
</dbReference>
<dbReference type="HAMAP" id="MF_00688">
    <property type="entry name" value="Leu_Phe_trans"/>
    <property type="match status" value="1"/>
</dbReference>
<dbReference type="InterPro" id="IPR016181">
    <property type="entry name" value="Acyl_CoA_acyltransferase"/>
</dbReference>
<dbReference type="InterPro" id="IPR004616">
    <property type="entry name" value="Leu/Phe-tRNA_Trfase"/>
</dbReference>
<dbReference type="InterPro" id="IPR042203">
    <property type="entry name" value="Leu/Phe-tRNA_Trfase_C"/>
</dbReference>
<dbReference type="InterPro" id="IPR042221">
    <property type="entry name" value="Leu/Phe-tRNA_Trfase_N"/>
</dbReference>
<dbReference type="NCBIfam" id="TIGR00667">
    <property type="entry name" value="aat"/>
    <property type="match status" value="1"/>
</dbReference>
<dbReference type="PANTHER" id="PTHR30098">
    <property type="entry name" value="LEUCYL/PHENYLALANYL-TRNA--PROTEIN TRANSFERASE"/>
    <property type="match status" value="1"/>
</dbReference>
<dbReference type="PANTHER" id="PTHR30098:SF2">
    <property type="entry name" value="LEUCYL_PHENYLALANYL-TRNA--PROTEIN TRANSFERASE"/>
    <property type="match status" value="1"/>
</dbReference>
<dbReference type="Pfam" id="PF03588">
    <property type="entry name" value="Leu_Phe_trans"/>
    <property type="match status" value="1"/>
</dbReference>
<dbReference type="SUPFAM" id="SSF55729">
    <property type="entry name" value="Acyl-CoA N-acyltransferases (Nat)"/>
    <property type="match status" value="1"/>
</dbReference>
<gene>
    <name evidence="1" type="primary">aat</name>
    <name type="ordered locus">CJE1252</name>
</gene>
<comment type="function">
    <text evidence="1">Functions in the N-end rule pathway of protein degradation where it conjugates Leu, Phe and, less efficiently, Met from aminoacyl-tRNAs to the N-termini of proteins containing an N-terminal arginine or lysine.</text>
</comment>
<comment type="catalytic activity">
    <reaction evidence="1">
        <text>N-terminal L-lysyl-[protein] + L-leucyl-tRNA(Leu) = N-terminal L-leucyl-L-lysyl-[protein] + tRNA(Leu) + H(+)</text>
        <dbReference type="Rhea" id="RHEA:12340"/>
        <dbReference type="Rhea" id="RHEA-COMP:9613"/>
        <dbReference type="Rhea" id="RHEA-COMP:9622"/>
        <dbReference type="Rhea" id="RHEA-COMP:12670"/>
        <dbReference type="Rhea" id="RHEA-COMP:12671"/>
        <dbReference type="ChEBI" id="CHEBI:15378"/>
        <dbReference type="ChEBI" id="CHEBI:65249"/>
        <dbReference type="ChEBI" id="CHEBI:78442"/>
        <dbReference type="ChEBI" id="CHEBI:78494"/>
        <dbReference type="ChEBI" id="CHEBI:133043"/>
        <dbReference type="EC" id="2.3.2.6"/>
    </reaction>
</comment>
<comment type="catalytic activity">
    <reaction evidence="1">
        <text>N-terminal L-arginyl-[protein] + L-leucyl-tRNA(Leu) = N-terminal L-leucyl-L-arginyl-[protein] + tRNA(Leu) + H(+)</text>
        <dbReference type="Rhea" id="RHEA:50416"/>
        <dbReference type="Rhea" id="RHEA-COMP:9613"/>
        <dbReference type="Rhea" id="RHEA-COMP:9622"/>
        <dbReference type="Rhea" id="RHEA-COMP:12672"/>
        <dbReference type="Rhea" id="RHEA-COMP:12673"/>
        <dbReference type="ChEBI" id="CHEBI:15378"/>
        <dbReference type="ChEBI" id="CHEBI:64719"/>
        <dbReference type="ChEBI" id="CHEBI:78442"/>
        <dbReference type="ChEBI" id="CHEBI:78494"/>
        <dbReference type="ChEBI" id="CHEBI:133044"/>
        <dbReference type="EC" id="2.3.2.6"/>
    </reaction>
</comment>
<comment type="catalytic activity">
    <reaction evidence="1">
        <text>L-phenylalanyl-tRNA(Phe) + an N-terminal L-alpha-aminoacyl-[protein] = an N-terminal L-phenylalanyl-L-alpha-aminoacyl-[protein] + tRNA(Phe)</text>
        <dbReference type="Rhea" id="RHEA:43632"/>
        <dbReference type="Rhea" id="RHEA-COMP:9668"/>
        <dbReference type="Rhea" id="RHEA-COMP:9699"/>
        <dbReference type="Rhea" id="RHEA-COMP:10636"/>
        <dbReference type="Rhea" id="RHEA-COMP:10637"/>
        <dbReference type="ChEBI" id="CHEBI:78442"/>
        <dbReference type="ChEBI" id="CHEBI:78531"/>
        <dbReference type="ChEBI" id="CHEBI:78597"/>
        <dbReference type="ChEBI" id="CHEBI:83561"/>
        <dbReference type="EC" id="2.3.2.6"/>
    </reaction>
</comment>
<comment type="subcellular location">
    <subcellularLocation>
        <location evidence="1">Cytoplasm</location>
    </subcellularLocation>
</comment>
<comment type="similarity">
    <text evidence="1">Belongs to the L/F-transferase family.</text>
</comment>
<organism>
    <name type="scientific">Campylobacter jejuni (strain RM1221)</name>
    <dbReference type="NCBI Taxonomy" id="195099"/>
    <lineage>
        <taxon>Bacteria</taxon>
        <taxon>Pseudomonadati</taxon>
        <taxon>Campylobacterota</taxon>
        <taxon>Epsilonproteobacteria</taxon>
        <taxon>Campylobacterales</taxon>
        <taxon>Campylobacteraceae</taxon>
        <taxon>Campylobacter</taxon>
    </lineage>
</organism>
<proteinExistence type="inferred from homology"/>
<sequence>MESSNLYSKLLNAPKNAPVFLSQNLEADFIVKAYTFGLFPWTSKPVTWWCPDPRCILIPNQIHIQKNMKKFINLYQIKLDYDFLKLITLCRDTRSQSWINDEFITTYYKLFTQGYAHSLELYENNELIGGIYGLILGKVFFGESMVSIKKNASKVAMIKLCDLLKPYDFIIDCQVYNQHLEFMGAHNISRKEFLNILKEKCNQESGFKNFKDLIT</sequence>
<evidence type="ECO:0000255" key="1">
    <source>
        <dbReference type="HAMAP-Rule" id="MF_00688"/>
    </source>
</evidence>